<gene>
    <name type="primary">nrdIB</name>
    <name type="ordered locus">SPBc2p161</name>
</gene>
<keyword id="KW-1185">Reference proteome</keyword>
<accession>P68525</accession>
<accession>O31876</accession>
<accession>O64172</accession>
<reference key="1">
    <citation type="journal article" date="1999" name="Microbiology">
        <title>Nucleotide sequence of the Bacillus subtilis temperate bacteriophage SPbetac2.</title>
        <authorList>
            <person name="Lazarevic V."/>
            <person name="Duesterhoeft A."/>
            <person name="Soldo B."/>
            <person name="Hilbert H."/>
            <person name="Mauel C."/>
            <person name="Karamata D."/>
        </authorList>
    </citation>
    <scope>NUCLEOTIDE SEQUENCE [LARGE SCALE GENOMIC DNA]</scope>
</reference>
<sequence>MTYESKTGNVKRFVKALQQEFDVEAIEITDDTIINQEFIHITYTIGFGEVPERTLSFINKNKNKIRGVAVSGNKVWGDNYGLAGDKLSAKFHTPLLLKFELSGTKQDLQKIIQEVQLIDKHNTKLDQAQ</sequence>
<protein>
    <recommendedName>
        <fullName>Phage protein nrdI</fullName>
    </recommendedName>
    <alternativeName>
        <fullName>BnrdI</fullName>
    </alternativeName>
</protein>
<organism>
    <name type="scientific">Bacillus phage SPbeta</name>
    <name type="common">Bacillus phage SPBc2</name>
    <name type="synonym">Bacteriophage SP-beta</name>
    <dbReference type="NCBI Taxonomy" id="2932878"/>
    <lineage>
        <taxon>Viruses</taxon>
        <taxon>Duplodnaviria</taxon>
        <taxon>Heunggongvirae</taxon>
        <taxon>Uroviricota</taxon>
        <taxon>Caudoviricetes</taxon>
        <taxon>Spbetavirus</taxon>
        <taxon>Spbetavirus SPbeta</taxon>
    </lineage>
</organism>
<organismHost>
    <name type="scientific">Bacillus pumilus</name>
    <name type="common">Bacillus mesentericus</name>
    <dbReference type="NCBI Taxonomy" id="1408"/>
</organismHost>
<organismHost>
    <name type="scientific">Bacillus subtilis</name>
    <dbReference type="NCBI Taxonomy" id="1423"/>
</organismHost>
<evidence type="ECO:0000305" key="1"/>
<proteinExistence type="inferred from homology"/>
<comment type="function">
    <text>Not known; probably involved in ribonucleotide reductase function.</text>
</comment>
<comment type="similarity">
    <text evidence="1">Belongs to the NrdI family.</text>
</comment>
<dbReference type="EMBL" id="AF020713">
    <property type="protein sequence ID" value="AAC13133.1"/>
    <property type="molecule type" value="Genomic_DNA"/>
</dbReference>
<dbReference type="PIR" id="T12924">
    <property type="entry name" value="T12924"/>
</dbReference>
<dbReference type="SMR" id="P68525"/>
<dbReference type="KEGG" id="vg:1261397"/>
<dbReference type="Proteomes" id="UP000009091">
    <property type="component" value="Genome"/>
</dbReference>
<dbReference type="GO" id="GO:0010181">
    <property type="term" value="F:FMN binding"/>
    <property type="evidence" value="ECO:0007669"/>
    <property type="project" value="InterPro"/>
</dbReference>
<dbReference type="GO" id="GO:0036211">
    <property type="term" value="P:protein modification process"/>
    <property type="evidence" value="ECO:0007669"/>
    <property type="project" value="InterPro"/>
</dbReference>
<dbReference type="Gene3D" id="3.40.50.360">
    <property type="match status" value="1"/>
</dbReference>
<dbReference type="HAMAP" id="MF_00128">
    <property type="entry name" value="NrdI"/>
    <property type="match status" value="1"/>
</dbReference>
<dbReference type="InterPro" id="IPR029039">
    <property type="entry name" value="Flavoprotein-like_sf"/>
</dbReference>
<dbReference type="InterPro" id="IPR020852">
    <property type="entry name" value="RNR_Ib_NrdI_bac"/>
</dbReference>
<dbReference type="InterPro" id="IPR004465">
    <property type="entry name" value="RNR_NrdI"/>
</dbReference>
<dbReference type="NCBIfam" id="TIGR00333">
    <property type="entry name" value="nrdI"/>
    <property type="match status" value="1"/>
</dbReference>
<dbReference type="PANTHER" id="PTHR37297">
    <property type="entry name" value="PROTEIN NRDI"/>
    <property type="match status" value="1"/>
</dbReference>
<dbReference type="PANTHER" id="PTHR37297:SF1">
    <property type="entry name" value="PROTEIN NRDI"/>
    <property type="match status" value="1"/>
</dbReference>
<dbReference type="Pfam" id="PF07972">
    <property type="entry name" value="Flavodoxin_NdrI"/>
    <property type="match status" value="1"/>
</dbReference>
<dbReference type="PIRSF" id="PIRSF005087">
    <property type="entry name" value="NrdI"/>
    <property type="match status" value="1"/>
</dbReference>
<dbReference type="SUPFAM" id="SSF52218">
    <property type="entry name" value="Flavoproteins"/>
    <property type="match status" value="1"/>
</dbReference>
<feature type="chain" id="PRO_0000164307" description="Phage protein nrdI">
    <location>
        <begin position="1"/>
        <end position="129"/>
    </location>
</feature>
<name>NRDIB_BPSPB</name>